<gene>
    <name type="primary">VSR3</name>
    <name type="synonym">BP80A'</name>
    <name type="synonym">ELP2A</name>
    <name type="ordered locus">At2g14740</name>
    <name type="ORF">F26C24.12</name>
</gene>
<sequence>MKQLLCYLPWLLLLTLLVSPLNDARFVVEKNSLSVTSPESIKGTHDSAIGNFGIPQYGGSMAGTVVYPKENQKSCKEFSDFSISFKSQPGALPTFLLVDRGDCFFALKVWNAQKAGASAVLVADNVDEPLITMDTPEEDVSSAKYIENITIPSALVTKGFGEKLKKAISGGDMVNLNLDWREAVPHPDDRVEYELWTNSNDECGVKCDMLMEFVKDFKGAAQILEKGGFTQFRPHYITWYCPHAFTLSRQCKSQCINKGRYCAPDPEQDFSSGYDGKDVVVENLRQLCVYKVANETGKPWVWWDYVTDFQIRCPMKEKKYNKECADSVIKSLGIDSKKLDKCMGDPDADLDNPVLKEEQDAQVGKGSRGDVTILPTLVVNNRQYRGKLEKSAVLKALCSGFEETTEPAICLSTDVESNECLDNNGGCWQDKSANITACKDTFRGRVCECPTVDGVQFKGDGYSHCEPSGPGRCTINNGGCWHEERDGHAFSACVDKDSVKCECPPGFKGDGTKKCEDINECKEKKACQCPECSCKNTWGSYECSCSGDLLYIRDHDTCISKTGAQVRSAWAAVWLIMLSLGLAAAGAYLVYKYRLRQYMDSEIRAIMAQYMPLDSQPEIPNHVNDERA</sequence>
<name>VSR3_ARATH</name>
<protein>
    <recommendedName>
        <fullName>Vacuolar-sorting receptor 3</fullName>
        <shortName>AtVSR3</shortName>
    </recommendedName>
    <alternativeName>
        <fullName>BP80-like protein a'</fullName>
        <shortName>AtBP80a'</shortName>
    </alternativeName>
    <alternativeName>
        <fullName>Epidermal growth factor receptor-like protein 2a</fullName>
        <shortName>AtELP2a</shortName>
    </alternativeName>
</protein>
<organism>
    <name type="scientific">Arabidopsis thaliana</name>
    <name type="common">Mouse-ear cress</name>
    <dbReference type="NCBI Taxonomy" id="3702"/>
    <lineage>
        <taxon>Eukaryota</taxon>
        <taxon>Viridiplantae</taxon>
        <taxon>Streptophyta</taxon>
        <taxon>Embryophyta</taxon>
        <taxon>Tracheophyta</taxon>
        <taxon>Spermatophyta</taxon>
        <taxon>Magnoliopsida</taxon>
        <taxon>eudicotyledons</taxon>
        <taxon>Gunneridae</taxon>
        <taxon>Pentapetalae</taxon>
        <taxon>rosids</taxon>
        <taxon>malvids</taxon>
        <taxon>Brassicales</taxon>
        <taxon>Brassicaceae</taxon>
        <taxon>Camelineae</taxon>
        <taxon>Arabidopsis</taxon>
    </lineage>
</organism>
<evidence type="ECO:0000250" key="1"/>
<evidence type="ECO:0000255" key="2"/>
<evidence type="ECO:0000269" key="3">
    <source>
    </source>
</evidence>
<evidence type="ECO:0000305" key="4"/>
<keyword id="KW-0106">Calcium</keyword>
<keyword id="KW-0968">Cytoplasmic vesicle</keyword>
<keyword id="KW-1015">Disulfide bond</keyword>
<keyword id="KW-0245">EGF-like domain</keyword>
<keyword id="KW-0325">Glycoprotein</keyword>
<keyword id="KW-0333">Golgi apparatus</keyword>
<keyword id="KW-0472">Membrane</keyword>
<keyword id="KW-0653">Protein transport</keyword>
<keyword id="KW-1185">Reference proteome</keyword>
<keyword id="KW-0677">Repeat</keyword>
<keyword id="KW-0732">Signal</keyword>
<keyword id="KW-0812">Transmembrane</keyword>
<keyword id="KW-1133">Transmembrane helix</keyword>
<keyword id="KW-0813">Transport</keyword>
<accession>O80977</accession>
<dbReference type="EMBL" id="AC004705">
    <property type="protein sequence ID" value="AAC24183.1"/>
    <property type="molecule type" value="Genomic_DNA"/>
</dbReference>
<dbReference type="EMBL" id="AC005398">
    <property type="protein sequence ID" value="AAM15053.1"/>
    <property type="molecule type" value="Genomic_DNA"/>
</dbReference>
<dbReference type="EMBL" id="CP002685">
    <property type="protein sequence ID" value="AEC06328.1"/>
    <property type="molecule type" value="Genomic_DNA"/>
</dbReference>
<dbReference type="EMBL" id="CP002685">
    <property type="protein sequence ID" value="AEC06329.1"/>
    <property type="molecule type" value="Genomic_DNA"/>
</dbReference>
<dbReference type="PIR" id="T02602">
    <property type="entry name" value="T02602"/>
</dbReference>
<dbReference type="RefSeq" id="NP_179081.1">
    <property type="nucleotide sequence ID" value="NM_127038.2"/>
</dbReference>
<dbReference type="RefSeq" id="NP_849955.1">
    <property type="nucleotide sequence ID" value="NM_179624.2"/>
</dbReference>
<dbReference type="SMR" id="O80977"/>
<dbReference type="BioGRID" id="1321">
    <property type="interactions" value="1"/>
</dbReference>
<dbReference type="FunCoup" id="O80977">
    <property type="interactions" value="242"/>
</dbReference>
<dbReference type="STRING" id="3702.O80977"/>
<dbReference type="GlyCosmos" id="O80977">
    <property type="glycosylation" value="3 sites, No reported glycans"/>
</dbReference>
<dbReference type="GlyGen" id="O80977">
    <property type="glycosylation" value="3 sites"/>
</dbReference>
<dbReference type="PaxDb" id="3702-AT2G14740.1"/>
<dbReference type="ProteomicsDB" id="242322"/>
<dbReference type="EnsemblPlants" id="AT2G14740.1">
    <property type="protein sequence ID" value="AT2G14740.1"/>
    <property type="gene ID" value="AT2G14740"/>
</dbReference>
<dbReference type="EnsemblPlants" id="AT2G14740.2">
    <property type="protein sequence ID" value="AT2G14740.2"/>
    <property type="gene ID" value="AT2G14740"/>
</dbReference>
<dbReference type="GeneID" id="815962"/>
<dbReference type="Gramene" id="AT2G14740.1">
    <property type="protein sequence ID" value="AT2G14740.1"/>
    <property type="gene ID" value="AT2G14740"/>
</dbReference>
<dbReference type="Gramene" id="AT2G14740.2">
    <property type="protein sequence ID" value="AT2G14740.2"/>
    <property type="gene ID" value="AT2G14740"/>
</dbReference>
<dbReference type="KEGG" id="ath:AT2G14740"/>
<dbReference type="Araport" id="AT2G14740"/>
<dbReference type="TAIR" id="AT2G14740">
    <property type="gene designation" value="VSR3"/>
</dbReference>
<dbReference type="eggNOG" id="ENOG502QSX2">
    <property type="taxonomic scope" value="Eukaryota"/>
</dbReference>
<dbReference type="HOGENOM" id="CLU_031082_1_0_1"/>
<dbReference type="InParanoid" id="O80977"/>
<dbReference type="OMA" id="GYTTCAA"/>
<dbReference type="PhylomeDB" id="O80977"/>
<dbReference type="PRO" id="PR:O80977"/>
<dbReference type="Proteomes" id="UP000006548">
    <property type="component" value="Chromosome 2"/>
</dbReference>
<dbReference type="ExpressionAtlas" id="O80977">
    <property type="expression patterns" value="baseline and differential"/>
</dbReference>
<dbReference type="GO" id="GO:0030665">
    <property type="term" value="C:clathrin-coated vesicle membrane"/>
    <property type="evidence" value="ECO:0007669"/>
    <property type="project" value="UniProtKB-SubCell"/>
</dbReference>
<dbReference type="GO" id="GO:0005768">
    <property type="term" value="C:endosome"/>
    <property type="evidence" value="ECO:0007005"/>
    <property type="project" value="TAIR"/>
</dbReference>
<dbReference type="GO" id="GO:0005794">
    <property type="term" value="C:Golgi apparatus"/>
    <property type="evidence" value="ECO:0007005"/>
    <property type="project" value="TAIR"/>
</dbReference>
<dbReference type="GO" id="GO:0000137">
    <property type="term" value="C:Golgi cis cisterna"/>
    <property type="evidence" value="ECO:0007005"/>
    <property type="project" value="TAIR"/>
</dbReference>
<dbReference type="GO" id="GO:0000139">
    <property type="term" value="C:Golgi membrane"/>
    <property type="evidence" value="ECO:0007669"/>
    <property type="project" value="UniProtKB-SubCell"/>
</dbReference>
<dbReference type="GO" id="GO:0005739">
    <property type="term" value="C:mitochondrion"/>
    <property type="evidence" value="ECO:0007005"/>
    <property type="project" value="TAIR"/>
</dbReference>
<dbReference type="GO" id="GO:0005802">
    <property type="term" value="C:trans-Golgi network"/>
    <property type="evidence" value="ECO:0007005"/>
    <property type="project" value="TAIR"/>
</dbReference>
<dbReference type="GO" id="GO:0005509">
    <property type="term" value="F:calcium ion binding"/>
    <property type="evidence" value="ECO:0007669"/>
    <property type="project" value="InterPro"/>
</dbReference>
<dbReference type="GO" id="GO:0006623">
    <property type="term" value="P:protein targeting to vacuole"/>
    <property type="evidence" value="ECO:0000315"/>
    <property type="project" value="TAIR"/>
</dbReference>
<dbReference type="CDD" id="cd00054">
    <property type="entry name" value="EGF_CA"/>
    <property type="match status" value="1"/>
</dbReference>
<dbReference type="CDD" id="cd02125">
    <property type="entry name" value="PA_VSR"/>
    <property type="match status" value="1"/>
</dbReference>
<dbReference type="FunFam" id="3.50.30.30:FF:000001">
    <property type="entry name" value="Vacuolar-sorting receptor 1"/>
    <property type="match status" value="1"/>
</dbReference>
<dbReference type="FunFam" id="2.10.25.10:FF:000178">
    <property type="entry name" value="vacuolar-sorting receptor 1"/>
    <property type="match status" value="1"/>
</dbReference>
<dbReference type="Gene3D" id="3.50.30.30">
    <property type="match status" value="1"/>
</dbReference>
<dbReference type="Gene3D" id="3.40.30.10">
    <property type="entry name" value="Glutaredoxin"/>
    <property type="match status" value="1"/>
</dbReference>
<dbReference type="Gene3D" id="2.10.25.10">
    <property type="entry name" value="Laminin"/>
    <property type="match status" value="3"/>
</dbReference>
<dbReference type="InterPro" id="IPR026823">
    <property type="entry name" value="cEGF"/>
</dbReference>
<dbReference type="InterPro" id="IPR001881">
    <property type="entry name" value="EGF-like_Ca-bd_dom"/>
</dbReference>
<dbReference type="InterPro" id="IPR000742">
    <property type="entry name" value="EGF-like_dom"/>
</dbReference>
<dbReference type="InterPro" id="IPR018097">
    <property type="entry name" value="EGF_Ca-bd_CS"/>
</dbReference>
<dbReference type="InterPro" id="IPR046450">
    <property type="entry name" value="PA_dom_sf"/>
</dbReference>
<dbReference type="InterPro" id="IPR003137">
    <property type="entry name" value="PA_domain"/>
</dbReference>
<dbReference type="InterPro" id="IPR056858">
    <property type="entry name" value="VSR_TRX"/>
</dbReference>
<dbReference type="PANTHER" id="PTHR22702">
    <property type="entry name" value="PROTEASE-ASSOCIATED DOMAIN-CONTAINING PROTEIN"/>
    <property type="match status" value="1"/>
</dbReference>
<dbReference type="PANTHER" id="PTHR22702:SF1">
    <property type="entry name" value="PROTEASE-ASSOCIATED DOMAIN-CONTAINING PROTEIN 1"/>
    <property type="match status" value="1"/>
</dbReference>
<dbReference type="Pfam" id="PF12662">
    <property type="entry name" value="cEGF"/>
    <property type="match status" value="1"/>
</dbReference>
<dbReference type="Pfam" id="PF02225">
    <property type="entry name" value="PA"/>
    <property type="match status" value="1"/>
</dbReference>
<dbReference type="Pfam" id="PF25011">
    <property type="entry name" value="VSR_TRX"/>
    <property type="match status" value="1"/>
</dbReference>
<dbReference type="SMART" id="SM00179">
    <property type="entry name" value="EGF_CA"/>
    <property type="match status" value="1"/>
</dbReference>
<dbReference type="SUPFAM" id="SSF52025">
    <property type="entry name" value="PA domain"/>
    <property type="match status" value="1"/>
</dbReference>
<dbReference type="PROSITE" id="PS00010">
    <property type="entry name" value="ASX_HYDROXYL"/>
    <property type="match status" value="1"/>
</dbReference>
<dbReference type="PROSITE" id="PS01186">
    <property type="entry name" value="EGF_2"/>
    <property type="match status" value="1"/>
</dbReference>
<dbReference type="PROSITE" id="PS01187">
    <property type="entry name" value="EGF_CA"/>
    <property type="match status" value="1"/>
</dbReference>
<proteinExistence type="evidence at transcript level"/>
<comment type="function">
    <text evidence="1">Vacuolar-sorting receptor (VSR) involved in clathrin-coated vesicles sorting from Golgi apparatus to vacuoles.</text>
</comment>
<comment type="subcellular location">
    <subcellularLocation>
        <location evidence="1">Membrane</location>
        <topology evidence="1">Single-pass type I membrane protein</topology>
    </subcellularLocation>
    <subcellularLocation>
        <location evidence="1">Golgi apparatus membrane</location>
        <topology evidence="1">Single-pass type I membrane protein</topology>
    </subcellularLocation>
    <subcellularLocation>
        <location evidence="1">Cytoplasmic vesicle</location>
        <location evidence="1">Clathrin-coated vesicle membrane</location>
        <topology evidence="1">Single-pass type I membrane protein</topology>
    </subcellularLocation>
    <subcellularLocation>
        <location evidence="1">Prevacuolar compartment membrane</location>
        <topology evidence="1">Single-pass type I membrane protein</topology>
    </subcellularLocation>
</comment>
<comment type="tissue specificity">
    <text evidence="3">Expressed in seeds, seedlings, roots, leaves, flowers and siliques.</text>
</comment>
<comment type="domain">
    <text evidence="1">The tyrosine-based internalization signal may be involved in trafficking at the TGN.</text>
</comment>
<comment type="similarity">
    <text evidence="4">Belongs to the VSR (BP-80) family.</text>
</comment>
<reference key="1">
    <citation type="journal article" date="1999" name="Nature">
        <title>Sequence and analysis of chromosome 2 of the plant Arabidopsis thaliana.</title>
        <authorList>
            <person name="Lin X."/>
            <person name="Kaul S."/>
            <person name="Rounsley S.D."/>
            <person name="Shea T.P."/>
            <person name="Benito M.-I."/>
            <person name="Town C.D."/>
            <person name="Fujii C.Y."/>
            <person name="Mason T.M."/>
            <person name="Bowman C.L."/>
            <person name="Barnstead M.E."/>
            <person name="Feldblyum T.V."/>
            <person name="Buell C.R."/>
            <person name="Ketchum K.A."/>
            <person name="Lee J.J."/>
            <person name="Ronning C.M."/>
            <person name="Koo H.L."/>
            <person name="Moffat K.S."/>
            <person name="Cronin L.A."/>
            <person name="Shen M."/>
            <person name="Pai G."/>
            <person name="Van Aken S."/>
            <person name="Umayam L."/>
            <person name="Tallon L.J."/>
            <person name="Gill J.E."/>
            <person name="Adams M.D."/>
            <person name="Carrera A.J."/>
            <person name="Creasy T.H."/>
            <person name="Goodman H.M."/>
            <person name="Somerville C.R."/>
            <person name="Copenhaver G.P."/>
            <person name="Preuss D."/>
            <person name="Nierman W.C."/>
            <person name="White O."/>
            <person name="Eisen J.A."/>
            <person name="Salzberg S.L."/>
            <person name="Fraser C.M."/>
            <person name="Venter J.C."/>
        </authorList>
    </citation>
    <scope>NUCLEOTIDE SEQUENCE [LARGE SCALE GENOMIC DNA]</scope>
    <source>
        <strain>cv. Columbia</strain>
    </source>
</reference>
<reference key="2">
    <citation type="journal article" date="2017" name="Plant J.">
        <title>Araport11: a complete reannotation of the Arabidopsis thaliana reference genome.</title>
        <authorList>
            <person name="Cheng C.Y."/>
            <person name="Krishnakumar V."/>
            <person name="Chan A.P."/>
            <person name="Thibaud-Nissen F."/>
            <person name="Schobel S."/>
            <person name="Town C.D."/>
        </authorList>
    </citation>
    <scope>GENOME REANNOTATION</scope>
    <source>
        <strain>cv. Columbia</strain>
    </source>
</reference>
<reference key="3">
    <citation type="journal article" date="2000" name="Electrophoresis">
        <title>A proteomic analysis of organelles from Arabidopsis thaliana.</title>
        <authorList>
            <person name="Prime T.A."/>
            <person name="Sherrier D.J."/>
            <person name="Mahon P."/>
            <person name="Packman L.C."/>
            <person name="Dupree P."/>
        </authorList>
    </citation>
    <scope>SUBCELLULAR LOCATION</scope>
</reference>
<reference key="4">
    <citation type="journal article" date="2003" name="J. Exp. Bot.">
        <title>Seed germination is blocked in Arabidopsis putative vacuolar sorting receptor (atbp80) antisense transformants.</title>
        <authorList>
            <person name="Laval V."/>
            <person name="Masclaux F."/>
            <person name="Serin A."/>
            <person name="Carriere M."/>
            <person name="Roldan C."/>
            <person name="Devic M."/>
            <person name="Pont-Lezica R.F."/>
            <person name="Galaud J.-P."/>
        </authorList>
    </citation>
    <scope>TISSUE SPECIFICITY</scope>
</reference>
<reference key="5">
    <citation type="journal article" date="2003" name="Proc. Natl. Acad. Sci. U.S.A.">
        <title>Vacuolar sorting receptor for seed storage proteins in Arabidopsis thaliana.</title>
        <authorList>
            <person name="Shimada T."/>
            <person name="Fuji K."/>
            <person name="Tamura K."/>
            <person name="Kondo M."/>
            <person name="Nishimura M."/>
            <person name="Hara-Nishimura I."/>
        </authorList>
    </citation>
    <scope>NOMENCLATURE</scope>
</reference>
<feature type="signal peptide" evidence="2">
    <location>
        <begin position="1"/>
        <end position="24"/>
    </location>
</feature>
<feature type="chain" id="PRO_0000036465" description="Vacuolar-sorting receptor 3">
    <location>
        <begin position="25"/>
        <end position="628"/>
    </location>
</feature>
<feature type="topological domain" description="Lumenal" evidence="2">
    <location>
        <begin position="25"/>
        <end position="569"/>
    </location>
</feature>
<feature type="transmembrane region" description="Helical" evidence="2">
    <location>
        <begin position="570"/>
        <end position="590"/>
    </location>
</feature>
<feature type="topological domain" description="Cytoplasmic" evidence="2">
    <location>
        <begin position="591"/>
        <end position="628"/>
    </location>
</feature>
<feature type="domain" description="PA">
    <location>
        <begin position="56"/>
        <end position="168"/>
    </location>
</feature>
<feature type="domain" description="EGF-like 1">
    <location>
        <begin position="416"/>
        <end position="466"/>
    </location>
</feature>
<feature type="domain" description="EGF-like 2">
    <location>
        <begin position="469"/>
        <end position="516"/>
    </location>
</feature>
<feature type="domain" description="EGF-like 3; calcium-binding" evidence="2">
    <location>
        <begin position="517"/>
        <end position="559"/>
    </location>
</feature>
<feature type="short sequence motif" description="Tyrosine-based internalization motif" evidence="1">
    <location>
        <begin position="610"/>
        <end position="613"/>
    </location>
</feature>
<feature type="glycosylation site" description="N-linked (GlcNAc...) asparagine" evidence="2">
    <location>
        <position position="148"/>
    </location>
</feature>
<feature type="glycosylation site" description="N-linked (GlcNAc...) asparagine" evidence="2">
    <location>
        <position position="294"/>
    </location>
</feature>
<feature type="glycosylation site" description="N-linked (GlcNAc...) asparagine" evidence="2">
    <location>
        <position position="434"/>
    </location>
</feature>
<feature type="disulfide bond" evidence="1">
    <location>
        <begin position="420"/>
        <end position="438"/>
    </location>
</feature>
<feature type="disulfide bond" evidence="1">
    <location>
        <begin position="427"/>
        <end position="447"/>
    </location>
</feature>
<feature type="disulfide bond" evidence="1">
    <location>
        <begin position="449"/>
        <end position="465"/>
    </location>
</feature>
<feature type="disulfide bond" evidence="1">
    <location>
        <begin position="473"/>
        <end position="493"/>
    </location>
</feature>
<feature type="disulfide bond" evidence="1">
    <location>
        <begin position="480"/>
        <end position="501"/>
    </location>
</feature>
<feature type="disulfide bond" evidence="1">
    <location>
        <begin position="503"/>
        <end position="515"/>
    </location>
</feature>
<feature type="disulfide bond" evidence="1">
    <location>
        <begin position="545"/>
        <end position="558"/>
    </location>
</feature>